<reference key="1">
    <citation type="journal article" date="1997" name="J. Bacteriol.">
        <title>Vacuolar protein sorting in fission yeast: cloning, biosynthesis, transport, and processing of carboxypeptidase Y from Schizosaccharomyces pombe.</title>
        <authorList>
            <person name="Tabuchi M."/>
            <person name="Iwaihara O."/>
            <person name="Ohtani Y."/>
            <person name="Ohuchi N."/>
            <person name="Sakurai J."/>
            <person name="Morita T."/>
            <person name="Iwahara S."/>
            <person name="Takegawa K."/>
        </authorList>
    </citation>
    <scope>NUCLEOTIDE SEQUENCE [GENOMIC DNA]</scope>
    <scope>SUBUNIT</scope>
    <scope>SUBCELLULAR LOCATION</scope>
    <scope>MUTAGENESIS OF CYS-627</scope>
</reference>
<reference key="2">
    <citation type="journal article" date="2002" name="Nature">
        <title>The genome sequence of Schizosaccharomyces pombe.</title>
        <authorList>
            <person name="Wood V."/>
            <person name="Gwilliam R."/>
            <person name="Rajandream M.A."/>
            <person name="Lyne M.H."/>
            <person name="Lyne R."/>
            <person name="Stewart A."/>
            <person name="Sgouros J.G."/>
            <person name="Peat N."/>
            <person name="Hayles J."/>
            <person name="Baker S.G."/>
            <person name="Basham D."/>
            <person name="Bowman S."/>
            <person name="Brooks K."/>
            <person name="Brown D."/>
            <person name="Brown S."/>
            <person name="Chillingworth T."/>
            <person name="Churcher C.M."/>
            <person name="Collins M."/>
            <person name="Connor R."/>
            <person name="Cronin A."/>
            <person name="Davis P."/>
            <person name="Feltwell T."/>
            <person name="Fraser A."/>
            <person name="Gentles S."/>
            <person name="Goble A."/>
            <person name="Hamlin N."/>
            <person name="Harris D.E."/>
            <person name="Hidalgo J."/>
            <person name="Hodgson G."/>
            <person name="Holroyd S."/>
            <person name="Hornsby T."/>
            <person name="Howarth S."/>
            <person name="Huckle E.J."/>
            <person name="Hunt S."/>
            <person name="Jagels K."/>
            <person name="James K.D."/>
            <person name="Jones L."/>
            <person name="Jones M."/>
            <person name="Leather S."/>
            <person name="McDonald S."/>
            <person name="McLean J."/>
            <person name="Mooney P."/>
            <person name="Moule S."/>
            <person name="Mungall K.L."/>
            <person name="Murphy L.D."/>
            <person name="Niblett D."/>
            <person name="Odell C."/>
            <person name="Oliver K."/>
            <person name="O'Neil S."/>
            <person name="Pearson D."/>
            <person name="Quail M.A."/>
            <person name="Rabbinowitsch E."/>
            <person name="Rutherford K.M."/>
            <person name="Rutter S."/>
            <person name="Saunders D."/>
            <person name="Seeger K."/>
            <person name="Sharp S."/>
            <person name="Skelton J."/>
            <person name="Simmonds M.N."/>
            <person name="Squares R."/>
            <person name="Squares S."/>
            <person name="Stevens K."/>
            <person name="Taylor K."/>
            <person name="Taylor R.G."/>
            <person name="Tivey A."/>
            <person name="Walsh S.V."/>
            <person name="Warren T."/>
            <person name="Whitehead S."/>
            <person name="Woodward J.R."/>
            <person name="Volckaert G."/>
            <person name="Aert R."/>
            <person name="Robben J."/>
            <person name="Grymonprez B."/>
            <person name="Weltjens I."/>
            <person name="Vanstreels E."/>
            <person name="Rieger M."/>
            <person name="Schaefer M."/>
            <person name="Mueller-Auer S."/>
            <person name="Gabel C."/>
            <person name="Fuchs M."/>
            <person name="Duesterhoeft A."/>
            <person name="Fritzc C."/>
            <person name="Holzer E."/>
            <person name="Moestl D."/>
            <person name="Hilbert H."/>
            <person name="Borzym K."/>
            <person name="Langer I."/>
            <person name="Beck A."/>
            <person name="Lehrach H."/>
            <person name="Reinhardt R."/>
            <person name="Pohl T.M."/>
            <person name="Eger P."/>
            <person name="Zimmermann W."/>
            <person name="Wedler H."/>
            <person name="Wambutt R."/>
            <person name="Purnelle B."/>
            <person name="Goffeau A."/>
            <person name="Cadieu E."/>
            <person name="Dreano S."/>
            <person name="Gloux S."/>
            <person name="Lelaure V."/>
            <person name="Mottier S."/>
            <person name="Galibert F."/>
            <person name="Aves S.J."/>
            <person name="Xiang Z."/>
            <person name="Hunt C."/>
            <person name="Moore K."/>
            <person name="Hurst S.M."/>
            <person name="Lucas M."/>
            <person name="Rochet M."/>
            <person name="Gaillardin C."/>
            <person name="Tallada V.A."/>
            <person name="Garzon A."/>
            <person name="Thode G."/>
            <person name="Daga R.R."/>
            <person name="Cruzado L."/>
            <person name="Jimenez J."/>
            <person name="Sanchez M."/>
            <person name="del Rey F."/>
            <person name="Benito J."/>
            <person name="Dominguez A."/>
            <person name="Revuelta J.L."/>
            <person name="Moreno S."/>
            <person name="Armstrong J."/>
            <person name="Forsburg S.L."/>
            <person name="Cerutti L."/>
            <person name="Lowe T."/>
            <person name="McCombie W.R."/>
            <person name="Paulsen I."/>
            <person name="Potashkin J."/>
            <person name="Shpakovski G.V."/>
            <person name="Ussery D."/>
            <person name="Barrell B.G."/>
            <person name="Nurse P."/>
        </authorList>
    </citation>
    <scope>NUCLEOTIDE SEQUENCE [LARGE SCALE GENOMIC DNA]</scope>
    <source>
        <strain>972 / ATCC 24843</strain>
    </source>
</reference>
<sequence length="1002" mass="114237">MLMKQTFLYFLLTCVVSAQFNGYVPPEQNGGDIVVPKDFYEKFGEDFIREQEESSAPLMNPVPERDEAEAPHHPKGHHEFNDDFEDDTALEHPGFKDKLDSFLQPARDFLHTVSDRLDNIFDDDEDEHVREKRPHDSADEDAPRRKHGKCKGKGKHHKGKHAKGKGKKSHPKPEDDSVFFDDERPKHHEFDDEDREFPAHHEPGEHMPPPPMHHKPGEHMPPPPMHHEPGEHMPPPPMHHEPGEHMPPPPMHHEPGEHMPPPPMHHEPGEHMPPPPMHHEPGEHMPPPPMHHEPGEHMPPPPMHHEPGEHMPPPPMHHEPGEHMPPPPMHHEPGEHMPPPPFKHHELEEHEGPEHHRGPEDKEHHKGPKDKEHHKGPKDKEHHKGPKDKEHHKGPKDKEHHKGPKDKEHHKGPKDKEHHQGPKEKHNERPEQNMQSSHELLVIEAFADLINSVPVEEIAEEFSRFLDTLGIEYYGNIPVHIQENAPKDSSIPPLFEFDDDLELSDLTPEQFAYLEMLKAEGIDPMTAFRDQSHPAKPSNAQPADSSRPYAVFSQEENGEHVNLKAFPDHTLRVKDSKPESLGIDTVKQYTGYLDVEDDRHLFFWFFESRNDPENDPVVLWLNGGPGCSSLTGLFMELGPSSINIETLKPEYNPHSWNSNASVIFLDQPINTGFSNGDDSVLDTVTAGKDVYAFLNLFFAKFPQYAHLDFHIAGESYAGHYIPQFAKEIMEHNQGANFFVASGYEMEKQYINLKSVLIGNGLTDPLVQYYFYGKMACESPYGPIMSQEECDRITGAYDTCAKLITGCYQTGFTPVCIGASLYCNNAMIGPFTKTGLNIYDIREECRDQEHLCYPETGAIESYLNQEFVQEALGVEYDYKGCNTEVNIGFLFKGDWMRKTFRDDVTAILEAGLPVLIYAGDADYICNYMGNEAWTDALEWAGQREFYEAELKPWSPNGKEAGRGKSFKNFGYLRLYEAGHMVPFNQPEASLEMLNSWIDGSLFA</sequence>
<comment type="function">
    <text>Involved in degradation of small peptides. Digests preferentially peptides containing an aliphatic or hydrophobic residue in P1' position, as well as methionine, leucine or phenylalanine in P1 position of ester substrate.</text>
</comment>
<comment type="catalytic activity">
    <reaction evidence="3">
        <text>Release of a C-terminal amino acid with broad specificity.</text>
        <dbReference type="EC" id="3.4.16.5"/>
    </reaction>
</comment>
<comment type="subunit">
    <text evidence="5">Heterodimer of two subunits of 32 kDa and 19 kDa derived from the precursor protein and linked by a disulfide bond.</text>
</comment>
<comment type="subcellular location">
    <subcellularLocation>
        <location evidence="5">Vacuole</location>
    </subcellularLocation>
    <text>Lysosome-like vacuoles.</text>
</comment>
<comment type="similarity">
    <text evidence="6">Belongs to the peptidase S10 family.</text>
</comment>
<evidence type="ECO:0000250" key="1"/>
<evidence type="ECO:0000255" key="2"/>
<evidence type="ECO:0000255" key="3">
    <source>
        <dbReference type="PROSITE-ProRule" id="PRU10074"/>
    </source>
</evidence>
<evidence type="ECO:0000256" key="4">
    <source>
        <dbReference type="SAM" id="MobiDB-lite"/>
    </source>
</evidence>
<evidence type="ECO:0000269" key="5">
    <source>
    </source>
</evidence>
<evidence type="ECO:0000305" key="6"/>
<accession>O13849</accession>
<accession>O14366</accession>
<organism>
    <name type="scientific">Schizosaccharomyces pombe (strain 972 / ATCC 24843)</name>
    <name type="common">Fission yeast</name>
    <dbReference type="NCBI Taxonomy" id="284812"/>
    <lineage>
        <taxon>Eukaryota</taxon>
        <taxon>Fungi</taxon>
        <taxon>Dikarya</taxon>
        <taxon>Ascomycota</taxon>
        <taxon>Taphrinomycotina</taxon>
        <taxon>Schizosaccharomycetes</taxon>
        <taxon>Schizosaccharomycetales</taxon>
        <taxon>Schizosaccharomycetaceae</taxon>
        <taxon>Schizosaccharomyces</taxon>
    </lineage>
</organism>
<protein>
    <recommendedName>
        <fullName>Carboxypeptidase Y</fullName>
        <shortName>CPY</shortName>
        <ecNumber>3.4.16.5</ecNumber>
    </recommendedName>
</protein>
<name>CBPY_SCHPO</name>
<dbReference type="EC" id="3.4.16.5"/>
<dbReference type="EMBL" id="D86560">
    <property type="protein sequence ID" value="BAA25568.1"/>
    <property type="molecule type" value="Genomic_DNA"/>
</dbReference>
<dbReference type="EMBL" id="CU329670">
    <property type="protein sequence ID" value="CAB10121.1"/>
    <property type="molecule type" value="Genomic_DNA"/>
</dbReference>
<dbReference type="PIR" id="T43236">
    <property type="entry name" value="T43236"/>
</dbReference>
<dbReference type="RefSeq" id="NP_594425.1">
    <property type="nucleotide sequence ID" value="NM_001019854.2"/>
</dbReference>
<dbReference type="SMR" id="O13849"/>
<dbReference type="BioGRID" id="278926">
    <property type="interactions" value="4"/>
</dbReference>
<dbReference type="FunCoup" id="O13849">
    <property type="interactions" value="22"/>
</dbReference>
<dbReference type="IntAct" id="O13849">
    <property type="interactions" value="1"/>
</dbReference>
<dbReference type="STRING" id="284812.O13849"/>
<dbReference type="ESTHER" id="schpo-PCY1">
    <property type="family name" value="Carboxypeptidase_S10"/>
</dbReference>
<dbReference type="MEROPS" id="S10.A66"/>
<dbReference type="GlyCosmos" id="O13849">
    <property type="glycosylation" value="1 site, No reported glycans"/>
</dbReference>
<dbReference type="iPTMnet" id="O13849"/>
<dbReference type="PaxDb" id="4896-SPAC19G12.10c.1"/>
<dbReference type="EnsemblFungi" id="SPAC19G12.10c.1">
    <property type="protein sequence ID" value="SPAC19G12.10c.1:pep"/>
    <property type="gene ID" value="SPAC19G12.10c"/>
</dbReference>
<dbReference type="GeneID" id="2542465"/>
<dbReference type="KEGG" id="spo:2542465"/>
<dbReference type="PomBase" id="SPAC19G12.10c">
    <property type="gene designation" value="cpy1"/>
</dbReference>
<dbReference type="VEuPathDB" id="FungiDB:SPAC19G12.10c"/>
<dbReference type="eggNOG" id="KOG1282">
    <property type="taxonomic scope" value="Eukaryota"/>
</dbReference>
<dbReference type="HOGENOM" id="CLU_010651_0_0_1"/>
<dbReference type="InParanoid" id="O13849"/>
<dbReference type="OMA" id="HEPGEHM"/>
<dbReference type="PRO" id="PR:O13849"/>
<dbReference type="Proteomes" id="UP000002485">
    <property type="component" value="Chromosome I"/>
</dbReference>
<dbReference type="GO" id="GO:0000324">
    <property type="term" value="C:fungal-type vacuole"/>
    <property type="evidence" value="ECO:0007005"/>
    <property type="project" value="PomBase"/>
</dbReference>
<dbReference type="GO" id="GO:0004185">
    <property type="term" value="F:serine-type carboxypeptidase activity"/>
    <property type="evidence" value="ECO:0000314"/>
    <property type="project" value="PomBase"/>
</dbReference>
<dbReference type="GO" id="GO:0007039">
    <property type="term" value="P:protein catabolic process in the vacuole"/>
    <property type="evidence" value="ECO:0000266"/>
    <property type="project" value="PomBase"/>
</dbReference>
<dbReference type="GO" id="GO:0031638">
    <property type="term" value="P:zymogen activation"/>
    <property type="evidence" value="ECO:0000266"/>
    <property type="project" value="PomBase"/>
</dbReference>
<dbReference type="Gene3D" id="1.10.287.410">
    <property type="match status" value="1"/>
</dbReference>
<dbReference type="Gene3D" id="3.40.50.1820">
    <property type="entry name" value="alpha/beta hydrolase"/>
    <property type="match status" value="1"/>
</dbReference>
<dbReference type="InterPro" id="IPR029058">
    <property type="entry name" value="AB_hydrolase_fold"/>
</dbReference>
<dbReference type="InterPro" id="IPR001563">
    <property type="entry name" value="Peptidase_S10"/>
</dbReference>
<dbReference type="InterPro" id="IPR018202">
    <property type="entry name" value="Ser_caboxypep_ser_AS"/>
</dbReference>
<dbReference type="PANTHER" id="PTHR11802:SF113">
    <property type="entry name" value="SERINE CARBOXYPEPTIDASE CTSA-4.1"/>
    <property type="match status" value="1"/>
</dbReference>
<dbReference type="PANTHER" id="PTHR11802">
    <property type="entry name" value="SERINE PROTEASE FAMILY S10 SERINE CARBOXYPEPTIDASE"/>
    <property type="match status" value="1"/>
</dbReference>
<dbReference type="Pfam" id="PF00450">
    <property type="entry name" value="Peptidase_S10"/>
    <property type="match status" value="1"/>
</dbReference>
<dbReference type="PRINTS" id="PR00724">
    <property type="entry name" value="CRBOXYPTASEC"/>
</dbReference>
<dbReference type="SUPFAM" id="SSF53474">
    <property type="entry name" value="alpha/beta-Hydrolases"/>
    <property type="match status" value="1"/>
</dbReference>
<dbReference type="PROSITE" id="PS00131">
    <property type="entry name" value="CARBOXYPEPT_SER_SER"/>
    <property type="match status" value="1"/>
</dbReference>
<feature type="signal peptide" evidence="2">
    <location>
        <begin position="1"/>
        <end position="18"/>
    </location>
</feature>
<feature type="propeptide" id="PRO_0000004295" evidence="2">
    <location>
        <begin position="19"/>
        <end position="521"/>
    </location>
</feature>
<feature type="chain" id="PRO_0000004296" description="Carboxypeptidase Y">
    <location>
        <begin position="522"/>
        <end position="1002"/>
    </location>
</feature>
<feature type="repeat" description="1-1">
    <location>
        <begin position="225"/>
        <end position="237"/>
    </location>
</feature>
<feature type="repeat" description="1-2">
    <location>
        <begin position="238"/>
        <end position="250"/>
    </location>
</feature>
<feature type="repeat" description="1-3">
    <location>
        <begin position="251"/>
        <end position="263"/>
    </location>
</feature>
<feature type="repeat" description="1-4">
    <location>
        <begin position="264"/>
        <end position="276"/>
    </location>
</feature>
<feature type="repeat" description="1-5">
    <location>
        <begin position="277"/>
        <end position="289"/>
    </location>
</feature>
<feature type="repeat" description="1-6">
    <location>
        <begin position="290"/>
        <end position="302"/>
    </location>
</feature>
<feature type="repeat" description="1-7">
    <location>
        <begin position="303"/>
        <end position="315"/>
    </location>
</feature>
<feature type="repeat" description="1-8">
    <location>
        <begin position="316"/>
        <end position="328"/>
    </location>
</feature>
<feature type="repeat" description="1-9">
    <location>
        <begin position="329"/>
        <end position="341"/>
    </location>
</feature>
<feature type="repeat" description="2-1">
    <location>
        <begin position="361"/>
        <end position="369"/>
    </location>
</feature>
<feature type="repeat" description="2-2">
    <location>
        <begin position="370"/>
        <end position="378"/>
    </location>
</feature>
<feature type="repeat" description="2-3">
    <location>
        <begin position="379"/>
        <end position="387"/>
    </location>
</feature>
<feature type="repeat" description="2-4">
    <location>
        <begin position="388"/>
        <end position="396"/>
    </location>
</feature>
<feature type="repeat" description="2-5">
    <location>
        <begin position="397"/>
        <end position="405"/>
    </location>
</feature>
<feature type="repeat" description="2-6">
    <location>
        <begin position="406"/>
        <end position="414"/>
    </location>
</feature>
<feature type="repeat" description="2-7; approximate">
    <location>
        <begin position="415"/>
        <end position="423"/>
    </location>
</feature>
<feature type="region of interest" description="Disordered" evidence="4">
    <location>
        <begin position="51"/>
        <end position="91"/>
    </location>
</feature>
<feature type="region of interest" description="Disordered" evidence="4">
    <location>
        <begin position="124"/>
        <end position="436"/>
    </location>
</feature>
<feature type="region of interest" description="9 X 13 AA tandem repeats of M-H-H-E-P-G-E-H-M-P-P-P-P">
    <location>
        <begin position="225"/>
        <end position="341"/>
    </location>
</feature>
<feature type="region of interest" description="7 X 9 AA tandem repeats of D-K-E-H-H-K-G-P-K">
    <location>
        <begin position="361"/>
        <end position="423"/>
    </location>
</feature>
<feature type="region of interest" description="Disordered" evidence="4">
    <location>
        <begin position="527"/>
        <end position="546"/>
    </location>
</feature>
<feature type="compositionally biased region" description="Basic and acidic residues" evidence="4">
    <location>
        <begin position="63"/>
        <end position="81"/>
    </location>
</feature>
<feature type="compositionally biased region" description="Basic and acidic residues" evidence="4">
    <location>
        <begin position="127"/>
        <end position="143"/>
    </location>
</feature>
<feature type="compositionally biased region" description="Basic residues" evidence="4">
    <location>
        <begin position="144"/>
        <end position="170"/>
    </location>
</feature>
<feature type="compositionally biased region" description="Basic and acidic residues" evidence="4">
    <location>
        <begin position="171"/>
        <end position="205"/>
    </location>
</feature>
<feature type="compositionally biased region" description="Basic and acidic residues" evidence="4">
    <location>
        <begin position="343"/>
        <end position="431"/>
    </location>
</feature>
<feature type="active site" evidence="3">
    <location>
        <position position="715"/>
    </location>
</feature>
<feature type="active site" evidence="3">
    <location>
        <position position="921"/>
    </location>
</feature>
<feature type="active site" evidence="3">
    <location>
        <position position="978"/>
    </location>
</feature>
<feature type="binding site" evidence="1">
    <location>
        <position position="924"/>
    </location>
    <ligand>
        <name>substrate</name>
    </ligand>
</feature>
<feature type="binding site" evidence="1">
    <location>
        <position position="979"/>
    </location>
    <ligand>
        <name>substrate</name>
    </ligand>
</feature>
<feature type="glycosylation site" description="N-linked (GlcNAc...) asparagine" evidence="2">
    <location>
        <position position="659"/>
    </location>
</feature>
<feature type="disulfide bond" evidence="1">
    <location>
        <begin position="627"/>
        <end position="880"/>
    </location>
</feature>
<feature type="disulfide bond" evidence="1">
    <location>
        <begin position="776"/>
        <end position="789"/>
    </location>
</feature>
<feature type="disulfide bond" evidence="1">
    <location>
        <begin position="799"/>
        <end position="822"/>
    </location>
</feature>
<feature type="disulfide bond" evidence="1">
    <location>
        <begin position="806"/>
        <end position="815"/>
    </location>
</feature>
<feature type="disulfide bond" evidence="1">
    <location>
        <begin position="844"/>
        <end position="851"/>
    </location>
</feature>
<feature type="mutagenesis site" description="36% of original activity." evidence="5">
    <original>C</original>
    <variation>T</variation>
    <location>
        <position position="627"/>
    </location>
</feature>
<proteinExistence type="evidence at protein level"/>
<gene>
    <name type="primary">cpy1</name>
    <name type="synonym">pcy1</name>
    <name type="ORF">SPAC19G12.10c</name>
</gene>
<keyword id="KW-0121">Carboxypeptidase</keyword>
<keyword id="KW-1015">Disulfide bond</keyword>
<keyword id="KW-0325">Glycoprotein</keyword>
<keyword id="KW-0378">Hydrolase</keyword>
<keyword id="KW-0645">Protease</keyword>
<keyword id="KW-1185">Reference proteome</keyword>
<keyword id="KW-0677">Repeat</keyword>
<keyword id="KW-0732">Signal</keyword>
<keyword id="KW-0926">Vacuole</keyword>
<keyword id="KW-0865">Zymogen</keyword>